<proteinExistence type="evidence at protein level"/>
<keyword id="KW-0027">Amidation</keyword>
<keyword id="KW-0165">Cleavage on pair of basic residues</keyword>
<keyword id="KW-0903">Direct protein sequencing</keyword>
<keyword id="KW-1015">Disulfide bond</keyword>
<keyword id="KW-0872">Ion channel impairing toxin</keyword>
<keyword id="KW-0960">Knottin</keyword>
<keyword id="KW-0528">Neurotoxin</keyword>
<keyword id="KW-0964">Secreted</keyword>
<keyword id="KW-0732">Signal</keyword>
<keyword id="KW-0800">Toxin</keyword>
<keyword id="KW-0738">Voltage-gated sodium channel impairing toxin</keyword>
<organism>
    <name type="scientific">Macrothele gigas</name>
    <name type="common">Japanese funnel web spider</name>
    <dbReference type="NCBI Taxonomy" id="223896"/>
    <lineage>
        <taxon>Eukaryota</taxon>
        <taxon>Metazoa</taxon>
        <taxon>Ecdysozoa</taxon>
        <taxon>Arthropoda</taxon>
        <taxon>Chelicerata</taxon>
        <taxon>Arachnida</taxon>
        <taxon>Araneae</taxon>
        <taxon>Mygalomorphae</taxon>
        <taxon>Macrothelidae</taxon>
        <taxon>Macrothele</taxon>
    </lineage>
</organism>
<comment type="function">
    <text evidence="3">Insecticidal neurotoxin. Shows competition for site 3 of insect voltage-gated sodium channels (Nav). Induces flaccid paralysis when injected into lepidopteran larvae. Is not toxic to mice when injected intracranially at 20 pmol/g.</text>
</comment>
<comment type="subcellular location">
    <subcellularLocation>
        <location evidence="3">Secreted</location>
    </subcellularLocation>
</comment>
<comment type="tissue specificity">
    <text evidence="6">Expressed by the venom gland.</text>
</comment>
<comment type="domain">
    <text evidence="1">The presence of a 'disulfide through disulfide knot' structurally defines this protein as a knottin.</text>
</comment>
<comment type="mass spectrometry" mass="4940.3" method="MALDI" evidence="3"/>
<comment type="toxic dose">
    <text evidence="3">LD(50) is 17.6 nmol/kg to lepidopteran larvae.</text>
</comment>
<comment type="similarity">
    <text evidence="5">Belongs to the neurotoxin 14 (magi-1) family. 09 (magi-1) subfamily.</text>
</comment>
<reference key="1">
    <citation type="submission" date="2003-09" db="EMBL/GenBank/DDBJ databases">
        <authorList>
            <person name="Satake H."/>
            <person name="Villegas E."/>
            <person name="Corzo G."/>
        </authorList>
    </citation>
    <scope>NUCLEOTIDE SEQUENCE [MRNA]</scope>
    <source>
        <tissue>Venom gland</tissue>
    </source>
</reference>
<reference key="2">
    <citation type="journal article" date="2003" name="FEBS Lett.">
        <title>Distinct primary structures of the major peptide toxins from the venom of the spider Macrothele gigas that bind to sites 3 and 4 in the sodium channel.</title>
        <authorList>
            <person name="Corzo G."/>
            <person name="Gilles N."/>
            <person name="Satake H."/>
            <person name="Villegas E."/>
            <person name="Dai L."/>
            <person name="Nakajima T."/>
            <person name="Haupt J."/>
        </authorList>
    </citation>
    <scope>PROTEIN SEQUENCE OF 81-120</scope>
    <scope>FUNCTION</scope>
    <scope>SUBCELLULAR LOCATION</scope>
    <scope>TOXIC DOSE</scope>
    <scope>MASS SPECTROMETRY</scope>
    <scope>AMIDATION AT LYS-120</scope>
    <scope>DISULFIDE BONDS</scope>
    <source>
        <tissue>Venom</tissue>
    </source>
</reference>
<name>TXMG2_MACGS</name>
<evidence type="ECO:0000250" key="1"/>
<evidence type="ECO:0000255" key="2"/>
<evidence type="ECO:0000269" key="3">
    <source>
    </source>
</evidence>
<evidence type="ECO:0000303" key="4">
    <source>
    </source>
</evidence>
<evidence type="ECO:0000305" key="5"/>
<evidence type="ECO:0000305" key="6">
    <source>
    </source>
</evidence>
<evidence type="ECO:0000312" key="7">
    <source>
        <dbReference type="EMBL" id="BAD13409.1"/>
    </source>
</evidence>
<accession>P83558</accession>
<accession>Q75WG9</accession>
<protein>
    <recommendedName>
        <fullName evidence="5">Mu-hexatoxin-Mg1a</fullName>
        <shortName evidence="5">Mu-HXTX-Mg1a</shortName>
    </recommendedName>
    <alternativeName>
        <fullName evidence="4 7">Neurotoxin magi-2</fullName>
    </alternativeName>
</protein>
<sequence length="121" mass="14188">MMTLSPFLLLLIAAVVIGNASEGEVKNEFEERLKDEFKDPSRSEVAEVILLRELEVLEETLFGKEMTSDTEENRNSREKRCMGYDIECNENLPCCKHRKLECVETSGYWWYKRKYCRPIKG</sequence>
<feature type="signal peptide" evidence="2">
    <location>
        <begin position="1"/>
        <end position="20"/>
    </location>
</feature>
<feature type="propeptide" id="PRO_0000035586" evidence="3">
    <location>
        <begin position="21"/>
        <end position="80"/>
    </location>
</feature>
<feature type="chain" id="PRO_0000035587" description="Mu-hexatoxin-Mg1a">
    <location>
        <begin position="81"/>
        <end position="120"/>
    </location>
</feature>
<feature type="modified residue" description="Lysine amide" evidence="3">
    <location>
        <position position="120"/>
    </location>
</feature>
<feature type="disulfide bond" evidence="1">
    <location>
        <begin position="81"/>
        <end position="95"/>
    </location>
</feature>
<feature type="disulfide bond" evidence="1">
    <location>
        <begin position="88"/>
        <end position="102"/>
    </location>
</feature>
<feature type="disulfide bond" evidence="1">
    <location>
        <begin position="94"/>
        <end position="116"/>
    </location>
</feature>
<dbReference type="EMBL" id="AB121202">
    <property type="protein sequence ID" value="BAD13409.1"/>
    <property type="molecule type" value="mRNA"/>
</dbReference>
<dbReference type="ArachnoServer" id="AS000378">
    <property type="toxin name" value="mu-hexatoxin-Mg1a"/>
</dbReference>
<dbReference type="GO" id="GO:0005576">
    <property type="term" value="C:extracellular region"/>
    <property type="evidence" value="ECO:0007669"/>
    <property type="project" value="UniProtKB-SubCell"/>
</dbReference>
<dbReference type="GO" id="GO:0019871">
    <property type="term" value="F:sodium channel inhibitor activity"/>
    <property type="evidence" value="ECO:0007669"/>
    <property type="project" value="InterPro"/>
</dbReference>
<dbReference type="GO" id="GO:0090729">
    <property type="term" value="F:toxin activity"/>
    <property type="evidence" value="ECO:0007669"/>
    <property type="project" value="UniProtKB-KW"/>
</dbReference>
<dbReference type="InterPro" id="IPR012627">
    <property type="entry name" value="Toxin_22"/>
</dbReference>
<dbReference type="Pfam" id="PF08092">
    <property type="entry name" value="Toxin_22"/>
    <property type="match status" value="1"/>
</dbReference>